<feature type="chain" id="PRO_0000092845" description="Phosphate import ATP-binding protein PstB">
    <location>
        <begin position="1"/>
        <end position="258"/>
    </location>
</feature>
<feature type="domain" description="ABC transporter" evidence="1">
    <location>
        <begin position="5"/>
        <end position="247"/>
    </location>
</feature>
<feature type="binding site" evidence="1">
    <location>
        <begin position="37"/>
        <end position="44"/>
    </location>
    <ligand>
        <name>ATP</name>
        <dbReference type="ChEBI" id="CHEBI:30616"/>
    </ligand>
</feature>
<reference key="1">
    <citation type="journal article" date="2005" name="Proc. Natl. Acad. Sci. U.S.A.">
        <title>The complete genome sequence of Mycobacterium avium subspecies paratuberculosis.</title>
        <authorList>
            <person name="Li L."/>
            <person name="Bannantine J.P."/>
            <person name="Zhang Q."/>
            <person name="Amonsin A."/>
            <person name="May B.J."/>
            <person name="Alt D."/>
            <person name="Banerji N."/>
            <person name="Kanjilal S."/>
            <person name="Kapur V."/>
        </authorList>
    </citation>
    <scope>NUCLEOTIDE SEQUENCE [LARGE SCALE GENOMIC DNA]</scope>
    <source>
        <strain>ATCC BAA-968 / K-10</strain>
    </source>
</reference>
<organism>
    <name type="scientific">Mycolicibacterium paratuberculosis (strain ATCC BAA-968 / K-10)</name>
    <name type="common">Mycobacterium paratuberculosis</name>
    <dbReference type="NCBI Taxonomy" id="262316"/>
    <lineage>
        <taxon>Bacteria</taxon>
        <taxon>Bacillati</taxon>
        <taxon>Actinomycetota</taxon>
        <taxon>Actinomycetes</taxon>
        <taxon>Mycobacteriales</taxon>
        <taxon>Mycobacteriaceae</taxon>
        <taxon>Mycobacterium</taxon>
        <taxon>Mycobacterium avium complex (MAC)</taxon>
    </lineage>
</organism>
<dbReference type="EC" id="7.3.2.1" evidence="1"/>
<dbReference type="EMBL" id="AE016958">
    <property type="protein sequence ID" value="AAS02971.1"/>
    <property type="molecule type" value="Genomic_DNA"/>
</dbReference>
<dbReference type="RefSeq" id="WP_003877210.1">
    <property type="nucleotide sequence ID" value="NZ_CP106873.1"/>
</dbReference>
<dbReference type="SMR" id="Q743D1"/>
<dbReference type="STRING" id="262316.MAP_0654"/>
<dbReference type="KEGG" id="mpa:MAP_0654"/>
<dbReference type="PATRIC" id="fig|262316.17.peg.689"/>
<dbReference type="eggNOG" id="COG1117">
    <property type="taxonomic scope" value="Bacteria"/>
</dbReference>
<dbReference type="HOGENOM" id="CLU_000604_1_22_11"/>
<dbReference type="Proteomes" id="UP000000580">
    <property type="component" value="Chromosome"/>
</dbReference>
<dbReference type="GO" id="GO:0005886">
    <property type="term" value="C:plasma membrane"/>
    <property type="evidence" value="ECO:0007669"/>
    <property type="project" value="UniProtKB-SubCell"/>
</dbReference>
<dbReference type="GO" id="GO:0005524">
    <property type="term" value="F:ATP binding"/>
    <property type="evidence" value="ECO:0007669"/>
    <property type="project" value="UniProtKB-KW"/>
</dbReference>
<dbReference type="GO" id="GO:0016887">
    <property type="term" value="F:ATP hydrolysis activity"/>
    <property type="evidence" value="ECO:0007669"/>
    <property type="project" value="InterPro"/>
</dbReference>
<dbReference type="GO" id="GO:0015415">
    <property type="term" value="F:ATPase-coupled phosphate ion transmembrane transporter activity"/>
    <property type="evidence" value="ECO:0007669"/>
    <property type="project" value="UniProtKB-EC"/>
</dbReference>
<dbReference type="GO" id="GO:0035435">
    <property type="term" value="P:phosphate ion transmembrane transport"/>
    <property type="evidence" value="ECO:0007669"/>
    <property type="project" value="InterPro"/>
</dbReference>
<dbReference type="CDD" id="cd03260">
    <property type="entry name" value="ABC_PstB_phosphate_transporter"/>
    <property type="match status" value="1"/>
</dbReference>
<dbReference type="FunFam" id="3.40.50.300:FF:000132">
    <property type="entry name" value="Phosphate import ATP-binding protein PstB"/>
    <property type="match status" value="1"/>
</dbReference>
<dbReference type="Gene3D" id="3.40.50.300">
    <property type="entry name" value="P-loop containing nucleotide triphosphate hydrolases"/>
    <property type="match status" value="1"/>
</dbReference>
<dbReference type="InterPro" id="IPR003593">
    <property type="entry name" value="AAA+_ATPase"/>
</dbReference>
<dbReference type="InterPro" id="IPR003439">
    <property type="entry name" value="ABC_transporter-like_ATP-bd"/>
</dbReference>
<dbReference type="InterPro" id="IPR017871">
    <property type="entry name" value="ABC_transporter-like_CS"/>
</dbReference>
<dbReference type="InterPro" id="IPR027417">
    <property type="entry name" value="P-loop_NTPase"/>
</dbReference>
<dbReference type="InterPro" id="IPR005670">
    <property type="entry name" value="PstB-like"/>
</dbReference>
<dbReference type="NCBIfam" id="TIGR00972">
    <property type="entry name" value="3a0107s01c2"/>
    <property type="match status" value="1"/>
</dbReference>
<dbReference type="PANTHER" id="PTHR43423">
    <property type="entry name" value="ABC TRANSPORTER I FAMILY MEMBER 17"/>
    <property type="match status" value="1"/>
</dbReference>
<dbReference type="PANTHER" id="PTHR43423:SF1">
    <property type="entry name" value="ABC TRANSPORTER I FAMILY MEMBER 17"/>
    <property type="match status" value="1"/>
</dbReference>
<dbReference type="Pfam" id="PF00005">
    <property type="entry name" value="ABC_tran"/>
    <property type="match status" value="1"/>
</dbReference>
<dbReference type="SMART" id="SM00382">
    <property type="entry name" value="AAA"/>
    <property type="match status" value="1"/>
</dbReference>
<dbReference type="SUPFAM" id="SSF52540">
    <property type="entry name" value="P-loop containing nucleoside triphosphate hydrolases"/>
    <property type="match status" value="1"/>
</dbReference>
<dbReference type="PROSITE" id="PS00211">
    <property type="entry name" value="ABC_TRANSPORTER_1"/>
    <property type="match status" value="1"/>
</dbReference>
<dbReference type="PROSITE" id="PS50893">
    <property type="entry name" value="ABC_TRANSPORTER_2"/>
    <property type="match status" value="1"/>
</dbReference>
<dbReference type="PROSITE" id="PS51238">
    <property type="entry name" value="PSTB"/>
    <property type="match status" value="1"/>
</dbReference>
<gene>
    <name evidence="1" type="primary">pstB</name>
    <name type="synonym">phoT</name>
    <name type="ordered locus">MAP_0654</name>
</gene>
<sequence length="258" mass="28219">MAKRLDLKGVNIYYGSFHAVAEVTLSVLPRSVTAFIGPSGCGKTTVLRTLNRMHEVVPGGRVEGSLLLDDEDIYGPGVDPVGVRRAIGMVFQRPNPFPAMSIRDNVVAGLKLQGVRNRKVLDETAEYSLRGANLWDEVKDRLDRPGGGLSGGQQQRLCIARAIAVQPDVLLMDEPCSALDPISTMAIEELISELKQDYTIVIVTHNMQQAARVSDYTAFFNLEAVGKPGRLIEVDDTEKIFSNPSQKATEDYISGRFG</sequence>
<protein>
    <recommendedName>
        <fullName evidence="1">Phosphate import ATP-binding protein PstB</fullName>
        <ecNumber evidence="1">7.3.2.1</ecNumber>
    </recommendedName>
    <alternativeName>
        <fullName evidence="1">ABC phosphate transporter</fullName>
    </alternativeName>
    <alternativeName>
        <fullName evidence="1">Phosphate-transporting ATPase</fullName>
    </alternativeName>
</protein>
<evidence type="ECO:0000255" key="1">
    <source>
        <dbReference type="HAMAP-Rule" id="MF_01702"/>
    </source>
</evidence>
<accession>Q743D1</accession>
<keyword id="KW-0067">ATP-binding</keyword>
<keyword id="KW-1003">Cell membrane</keyword>
<keyword id="KW-0472">Membrane</keyword>
<keyword id="KW-0547">Nucleotide-binding</keyword>
<keyword id="KW-0592">Phosphate transport</keyword>
<keyword id="KW-1185">Reference proteome</keyword>
<keyword id="KW-1278">Translocase</keyword>
<keyword id="KW-0813">Transport</keyword>
<proteinExistence type="inferred from homology"/>
<name>PSTB_MYCPA</name>
<comment type="function">
    <text evidence="1">Part of the ABC transporter complex PstSACB involved in phosphate import. Responsible for energy coupling to the transport system.</text>
</comment>
<comment type="catalytic activity">
    <reaction evidence="1">
        <text>phosphate(out) + ATP + H2O = ADP + 2 phosphate(in) + H(+)</text>
        <dbReference type="Rhea" id="RHEA:24440"/>
        <dbReference type="ChEBI" id="CHEBI:15377"/>
        <dbReference type="ChEBI" id="CHEBI:15378"/>
        <dbReference type="ChEBI" id="CHEBI:30616"/>
        <dbReference type="ChEBI" id="CHEBI:43474"/>
        <dbReference type="ChEBI" id="CHEBI:456216"/>
        <dbReference type="EC" id="7.3.2.1"/>
    </reaction>
</comment>
<comment type="subunit">
    <text evidence="1">The complex is composed of two ATP-binding proteins (PstB), two transmembrane proteins (PstC and PstA) and a solute-binding protein (PstS).</text>
</comment>
<comment type="subcellular location">
    <subcellularLocation>
        <location evidence="1">Cell membrane</location>
        <topology evidence="1">Peripheral membrane protein</topology>
    </subcellularLocation>
</comment>
<comment type="similarity">
    <text evidence="1">Belongs to the ABC transporter superfamily. Phosphate importer (TC 3.A.1.7) family.</text>
</comment>